<accession>Q9P2Z0</accession>
<accession>B2R8R0</accession>
<name>THA10_HUMAN</name>
<proteinExistence type="evidence at protein level"/>
<keyword id="KW-0238">DNA-binding</keyword>
<keyword id="KW-0479">Metal-binding</keyword>
<keyword id="KW-1267">Proteomics identification</keyword>
<keyword id="KW-1185">Reference proteome</keyword>
<keyword id="KW-0862">Zinc</keyword>
<keyword id="KW-0863">Zinc-finger</keyword>
<feature type="chain" id="PRO_0000068651" description="THAP domain-containing protein 10">
    <location>
        <begin position="1"/>
        <end position="257"/>
    </location>
</feature>
<feature type="zinc finger region" description="THAP-type" evidence="1">
    <location>
        <begin position="1"/>
        <end position="90"/>
    </location>
</feature>
<feature type="region of interest" description="Disordered" evidence="2">
    <location>
        <begin position="154"/>
        <end position="178"/>
    </location>
</feature>
<feature type="compositionally biased region" description="Polar residues" evidence="2">
    <location>
        <begin position="154"/>
        <end position="168"/>
    </location>
</feature>
<evidence type="ECO:0000255" key="1">
    <source>
        <dbReference type="PROSITE-ProRule" id="PRU00309"/>
    </source>
</evidence>
<evidence type="ECO:0000256" key="2">
    <source>
        <dbReference type="SAM" id="MobiDB-lite"/>
    </source>
</evidence>
<reference key="1">
    <citation type="submission" date="2000-07" db="EMBL/GenBank/DDBJ databases">
        <authorList>
            <consortium name="The European IMAGE consortium"/>
        </authorList>
    </citation>
    <scope>NUCLEOTIDE SEQUENCE [LARGE SCALE MRNA]</scope>
</reference>
<reference key="2">
    <citation type="journal article" date="2004" name="Nat. Genet.">
        <title>Complete sequencing and characterization of 21,243 full-length human cDNAs.</title>
        <authorList>
            <person name="Ota T."/>
            <person name="Suzuki Y."/>
            <person name="Nishikawa T."/>
            <person name="Otsuki T."/>
            <person name="Sugiyama T."/>
            <person name="Irie R."/>
            <person name="Wakamatsu A."/>
            <person name="Hayashi K."/>
            <person name="Sato H."/>
            <person name="Nagai K."/>
            <person name="Kimura K."/>
            <person name="Makita H."/>
            <person name="Sekine M."/>
            <person name="Obayashi M."/>
            <person name="Nishi T."/>
            <person name="Shibahara T."/>
            <person name="Tanaka T."/>
            <person name="Ishii S."/>
            <person name="Yamamoto J."/>
            <person name="Saito K."/>
            <person name="Kawai Y."/>
            <person name="Isono Y."/>
            <person name="Nakamura Y."/>
            <person name="Nagahari K."/>
            <person name="Murakami K."/>
            <person name="Yasuda T."/>
            <person name="Iwayanagi T."/>
            <person name="Wagatsuma M."/>
            <person name="Shiratori A."/>
            <person name="Sudo H."/>
            <person name="Hosoiri T."/>
            <person name="Kaku Y."/>
            <person name="Kodaira H."/>
            <person name="Kondo H."/>
            <person name="Sugawara M."/>
            <person name="Takahashi M."/>
            <person name="Kanda K."/>
            <person name="Yokoi T."/>
            <person name="Furuya T."/>
            <person name="Kikkawa E."/>
            <person name="Omura Y."/>
            <person name="Abe K."/>
            <person name="Kamihara K."/>
            <person name="Katsuta N."/>
            <person name="Sato K."/>
            <person name="Tanikawa M."/>
            <person name="Yamazaki M."/>
            <person name="Ninomiya K."/>
            <person name="Ishibashi T."/>
            <person name="Yamashita H."/>
            <person name="Murakawa K."/>
            <person name="Fujimori K."/>
            <person name="Tanai H."/>
            <person name="Kimata M."/>
            <person name="Watanabe M."/>
            <person name="Hiraoka S."/>
            <person name="Chiba Y."/>
            <person name="Ishida S."/>
            <person name="Ono Y."/>
            <person name="Takiguchi S."/>
            <person name="Watanabe S."/>
            <person name="Yosida M."/>
            <person name="Hotuta T."/>
            <person name="Kusano J."/>
            <person name="Kanehori K."/>
            <person name="Takahashi-Fujii A."/>
            <person name="Hara H."/>
            <person name="Tanase T.-O."/>
            <person name="Nomura Y."/>
            <person name="Togiya S."/>
            <person name="Komai F."/>
            <person name="Hara R."/>
            <person name="Takeuchi K."/>
            <person name="Arita M."/>
            <person name="Imose N."/>
            <person name="Musashino K."/>
            <person name="Yuuki H."/>
            <person name="Oshima A."/>
            <person name="Sasaki N."/>
            <person name="Aotsuka S."/>
            <person name="Yoshikawa Y."/>
            <person name="Matsunawa H."/>
            <person name="Ichihara T."/>
            <person name="Shiohata N."/>
            <person name="Sano S."/>
            <person name="Moriya S."/>
            <person name="Momiyama H."/>
            <person name="Satoh N."/>
            <person name="Takami S."/>
            <person name="Terashima Y."/>
            <person name="Suzuki O."/>
            <person name="Nakagawa S."/>
            <person name="Senoh A."/>
            <person name="Mizoguchi H."/>
            <person name="Goto Y."/>
            <person name="Shimizu F."/>
            <person name="Wakebe H."/>
            <person name="Hishigaki H."/>
            <person name="Watanabe T."/>
            <person name="Sugiyama A."/>
            <person name="Takemoto M."/>
            <person name="Kawakami B."/>
            <person name="Yamazaki M."/>
            <person name="Watanabe K."/>
            <person name="Kumagai A."/>
            <person name="Itakura S."/>
            <person name="Fukuzumi Y."/>
            <person name="Fujimori Y."/>
            <person name="Komiyama M."/>
            <person name="Tashiro H."/>
            <person name="Tanigami A."/>
            <person name="Fujiwara T."/>
            <person name="Ono T."/>
            <person name="Yamada K."/>
            <person name="Fujii Y."/>
            <person name="Ozaki K."/>
            <person name="Hirao M."/>
            <person name="Ohmori Y."/>
            <person name="Kawabata A."/>
            <person name="Hikiji T."/>
            <person name="Kobatake N."/>
            <person name="Inagaki H."/>
            <person name="Ikema Y."/>
            <person name="Okamoto S."/>
            <person name="Okitani R."/>
            <person name="Kawakami T."/>
            <person name="Noguchi S."/>
            <person name="Itoh T."/>
            <person name="Shigeta K."/>
            <person name="Senba T."/>
            <person name="Matsumura K."/>
            <person name="Nakajima Y."/>
            <person name="Mizuno T."/>
            <person name="Morinaga M."/>
            <person name="Sasaki M."/>
            <person name="Togashi T."/>
            <person name="Oyama M."/>
            <person name="Hata H."/>
            <person name="Watanabe M."/>
            <person name="Komatsu T."/>
            <person name="Mizushima-Sugano J."/>
            <person name="Satoh T."/>
            <person name="Shirai Y."/>
            <person name="Takahashi Y."/>
            <person name="Nakagawa K."/>
            <person name="Okumura K."/>
            <person name="Nagase T."/>
            <person name="Nomura N."/>
            <person name="Kikuchi H."/>
            <person name="Masuho Y."/>
            <person name="Yamashita R."/>
            <person name="Nakai K."/>
            <person name="Yada T."/>
            <person name="Nakamura Y."/>
            <person name="Ohara O."/>
            <person name="Isogai T."/>
            <person name="Sugano S."/>
        </authorList>
    </citation>
    <scope>NUCLEOTIDE SEQUENCE [LARGE SCALE MRNA]</scope>
    <source>
        <tissue>Substantia nigra</tissue>
    </source>
</reference>
<reference key="3">
    <citation type="submission" date="2005-07" db="EMBL/GenBank/DDBJ databases">
        <authorList>
            <person name="Mural R.J."/>
            <person name="Istrail S."/>
            <person name="Sutton G.G."/>
            <person name="Florea L."/>
            <person name="Halpern A.L."/>
            <person name="Mobarry C.M."/>
            <person name="Lippert R."/>
            <person name="Walenz B."/>
            <person name="Shatkay H."/>
            <person name="Dew I."/>
            <person name="Miller J.R."/>
            <person name="Flanigan M.J."/>
            <person name="Edwards N.J."/>
            <person name="Bolanos R."/>
            <person name="Fasulo D."/>
            <person name="Halldorsson B.V."/>
            <person name="Hannenhalli S."/>
            <person name="Turner R."/>
            <person name="Yooseph S."/>
            <person name="Lu F."/>
            <person name="Nusskern D.R."/>
            <person name="Shue B.C."/>
            <person name="Zheng X.H."/>
            <person name="Zhong F."/>
            <person name="Delcher A.L."/>
            <person name="Huson D.H."/>
            <person name="Kravitz S.A."/>
            <person name="Mouchard L."/>
            <person name="Reinert K."/>
            <person name="Remington K.A."/>
            <person name="Clark A.G."/>
            <person name="Waterman M.S."/>
            <person name="Eichler E.E."/>
            <person name="Adams M.D."/>
            <person name="Hunkapiller M.W."/>
            <person name="Myers E.W."/>
            <person name="Venter J.C."/>
        </authorList>
    </citation>
    <scope>NUCLEOTIDE SEQUENCE [LARGE SCALE GENOMIC DNA]</scope>
</reference>
<reference key="4">
    <citation type="journal article" date="2004" name="Genome Res.">
        <title>The status, quality, and expansion of the NIH full-length cDNA project: the Mammalian Gene Collection (MGC).</title>
        <authorList>
            <consortium name="The MGC Project Team"/>
        </authorList>
    </citation>
    <scope>NUCLEOTIDE SEQUENCE [LARGE SCALE MRNA]</scope>
    <source>
        <tissue>Pancreas</tissue>
        <tissue>Skin</tissue>
    </source>
</reference>
<comment type="interaction">
    <interactant intactId="EBI-745404">
        <id>Q9P2Z0</id>
    </interactant>
    <interactant intactId="EBI-748961">
        <id>O95273</id>
        <label>CCNDBP1</label>
    </interactant>
    <organismsDiffer>false</organismsDiffer>
    <experiments>5</experiments>
</comment>
<comment type="interaction">
    <interactant intactId="EBI-745404">
        <id>Q9P2Z0</id>
    </interactant>
    <interactant intactId="EBI-349105">
        <id>P63167</id>
        <label>DYNLL1</label>
    </interactant>
    <organismsDiffer>false</organismsDiffer>
    <experiments>8</experiments>
</comment>
<comment type="interaction">
    <interactant intactId="EBI-745404">
        <id>Q9P2Z0</id>
    </interactant>
    <interactant intactId="EBI-10172150">
        <id>P60370</id>
        <label>KRTAP10-5</label>
    </interactant>
    <organismsDiffer>false</organismsDiffer>
    <experiments>3</experiments>
</comment>
<comment type="interaction">
    <interactant intactId="EBI-745404">
        <id>Q9P2Z0</id>
    </interactant>
    <interactant intactId="EBI-10171774">
        <id>P60410</id>
        <label>KRTAP10-8</label>
    </interactant>
    <organismsDiffer>false</organismsDiffer>
    <experiments>3</experiments>
</comment>
<comment type="interaction">
    <interactant intactId="EBI-745404">
        <id>Q9P2Z0</id>
    </interactant>
    <interactant intactId="EBI-10172052">
        <id>P60411</id>
        <label>KRTAP10-9</label>
    </interactant>
    <organismsDiffer>false</organismsDiffer>
    <experiments>3</experiments>
</comment>
<comment type="interaction">
    <interactant intactId="EBI-745404">
        <id>Q9P2Z0</id>
    </interactant>
    <interactant intactId="EBI-741037">
        <id>Q9BRK4</id>
        <label>LZTS2</label>
    </interactant>
    <organismsDiffer>false</organismsDiffer>
    <experiments>3</experiments>
</comment>
<comment type="interaction">
    <interactant intactId="EBI-745404">
        <id>Q9P2Z0</id>
    </interactant>
    <interactant intactId="EBI-744782">
        <id>Q9Y5B8</id>
        <label>NME7</label>
    </interactant>
    <organismsDiffer>false</organismsDiffer>
    <experiments>3</experiments>
</comment>
<comment type="interaction">
    <interactant intactId="EBI-745404">
        <id>Q9P2Z0</id>
    </interactant>
    <interactant intactId="EBI-742388">
        <id>Q9H8W4</id>
        <label>PLEKHF2</label>
    </interactant>
    <organismsDiffer>false</organismsDiffer>
    <experiments>3</experiments>
</comment>
<comment type="interaction">
    <interactant intactId="EBI-745404">
        <id>Q9P2Z0</id>
    </interactant>
    <interactant intactId="EBI-355546">
        <id>P61289</id>
        <label>PSME3</label>
    </interactant>
    <organismsDiffer>false</organismsDiffer>
    <experiments>3</experiments>
</comment>
<comment type="interaction">
    <interactant intactId="EBI-745404">
        <id>Q9P2Z0</id>
    </interactant>
    <interactant intactId="EBI-712344">
        <id>Q03393</id>
        <label>PTS</label>
    </interactant>
    <organismsDiffer>false</organismsDiffer>
    <experiments>3</experiments>
</comment>
<sequence>MPARCVAAHCGNTTKSGKSLFRFPKDRAVRLLWDRFVRGCRADWYGGNDRSVICSDHFAPACFDVSSVIQKNLRFSQRLRLVAGAVPTLHRVPAPAPKRGEEGDQAGRLDTRGELQAARHSEAAPGPVSCTRPRAGKQAAASQITCENELVQTQPHADNPSNTVTSVPTHCEEGPVHKSTQISLKRPRHRSVGIQAKVKAFGKRLCNATTQTEELWSRTSSLFDIYSSDSETDTDWDIKSEQSDLSYMAVQVKEETC</sequence>
<dbReference type="EMBL" id="AL360202">
    <property type="protein sequence ID" value="CAB96109.1"/>
    <property type="molecule type" value="mRNA"/>
</dbReference>
<dbReference type="EMBL" id="AK313472">
    <property type="protein sequence ID" value="BAG36257.1"/>
    <property type="molecule type" value="mRNA"/>
</dbReference>
<dbReference type="EMBL" id="CH471082">
    <property type="protein sequence ID" value="EAW77863.1"/>
    <property type="molecule type" value="Genomic_DNA"/>
</dbReference>
<dbReference type="EMBL" id="BC027857">
    <property type="protein sequence ID" value="AAH27857.1"/>
    <property type="molecule type" value="mRNA"/>
</dbReference>
<dbReference type="EMBL" id="BC072414">
    <property type="protein sequence ID" value="AAH72414.1"/>
    <property type="molecule type" value="mRNA"/>
</dbReference>
<dbReference type="CCDS" id="CCDS10237.1"/>
<dbReference type="RefSeq" id="NP_064532.1">
    <property type="nucleotide sequence ID" value="NM_020147.4"/>
</dbReference>
<dbReference type="SMR" id="Q9P2Z0"/>
<dbReference type="BioGRID" id="121236">
    <property type="interactions" value="31"/>
</dbReference>
<dbReference type="FunCoup" id="Q9P2Z0">
    <property type="interactions" value="430"/>
</dbReference>
<dbReference type="IntAct" id="Q9P2Z0">
    <property type="interactions" value="26"/>
</dbReference>
<dbReference type="MINT" id="Q9P2Z0"/>
<dbReference type="STRING" id="9606.ENSP00000249861"/>
<dbReference type="iPTMnet" id="Q9P2Z0"/>
<dbReference type="PhosphoSitePlus" id="Q9P2Z0"/>
<dbReference type="BioMuta" id="THAP10"/>
<dbReference type="DMDM" id="41018369"/>
<dbReference type="jPOST" id="Q9P2Z0"/>
<dbReference type="MassIVE" id="Q9P2Z0"/>
<dbReference type="PaxDb" id="9606-ENSP00000249861"/>
<dbReference type="PeptideAtlas" id="Q9P2Z0"/>
<dbReference type="ProteomicsDB" id="83915"/>
<dbReference type="Antibodypedia" id="26487">
    <property type="antibodies" value="78 antibodies from 19 providers"/>
</dbReference>
<dbReference type="DNASU" id="56906"/>
<dbReference type="Ensembl" id="ENST00000249861.9">
    <property type="protein sequence ID" value="ENSP00000249861.4"/>
    <property type="gene ID" value="ENSG00000129028.9"/>
</dbReference>
<dbReference type="GeneID" id="56906"/>
<dbReference type="KEGG" id="hsa:56906"/>
<dbReference type="MANE-Select" id="ENST00000249861.9">
    <property type="protein sequence ID" value="ENSP00000249861.4"/>
    <property type="RefSeq nucleotide sequence ID" value="NM_020147.4"/>
    <property type="RefSeq protein sequence ID" value="NP_064532.1"/>
</dbReference>
<dbReference type="UCSC" id="uc002asv.4">
    <property type="organism name" value="human"/>
</dbReference>
<dbReference type="AGR" id="HGNC:23193"/>
<dbReference type="CTD" id="56906"/>
<dbReference type="DisGeNET" id="56906"/>
<dbReference type="GeneCards" id="THAP10"/>
<dbReference type="HGNC" id="HGNC:23193">
    <property type="gene designation" value="THAP10"/>
</dbReference>
<dbReference type="HPA" id="ENSG00000129028">
    <property type="expression patterns" value="Low tissue specificity"/>
</dbReference>
<dbReference type="MIM" id="612538">
    <property type="type" value="gene"/>
</dbReference>
<dbReference type="neXtProt" id="NX_Q9P2Z0"/>
<dbReference type="OpenTargets" id="ENSG00000129028"/>
<dbReference type="PharmGKB" id="PA134988462"/>
<dbReference type="VEuPathDB" id="HostDB:ENSG00000129028"/>
<dbReference type="eggNOG" id="ENOG502SDT3">
    <property type="taxonomic scope" value="Eukaryota"/>
</dbReference>
<dbReference type="GeneTree" id="ENSGT00510000050001"/>
<dbReference type="HOGENOM" id="CLU_094625_0_0_1"/>
<dbReference type="InParanoid" id="Q9P2Z0"/>
<dbReference type="OMA" id="CENEVMQ"/>
<dbReference type="OrthoDB" id="9446301at2759"/>
<dbReference type="PAN-GO" id="Q9P2Z0">
    <property type="GO annotations" value="0 GO annotations based on evolutionary models"/>
</dbReference>
<dbReference type="PhylomeDB" id="Q9P2Z0"/>
<dbReference type="TreeFam" id="TF330127"/>
<dbReference type="PathwayCommons" id="Q9P2Z0"/>
<dbReference type="SignaLink" id="Q9P2Z0"/>
<dbReference type="BioGRID-ORCS" id="56906">
    <property type="hits" value="14 hits in 1168 CRISPR screens"/>
</dbReference>
<dbReference type="GenomeRNAi" id="56906"/>
<dbReference type="Pharos" id="Q9P2Z0">
    <property type="development level" value="Tdark"/>
</dbReference>
<dbReference type="PRO" id="PR:Q9P2Z0"/>
<dbReference type="Proteomes" id="UP000005640">
    <property type="component" value="Chromosome 15"/>
</dbReference>
<dbReference type="RNAct" id="Q9P2Z0">
    <property type="molecule type" value="protein"/>
</dbReference>
<dbReference type="Bgee" id="ENSG00000129028">
    <property type="expression patterns" value="Expressed in bronchial epithelial cell and 156 other cell types or tissues"/>
</dbReference>
<dbReference type="ExpressionAtlas" id="Q9P2Z0">
    <property type="expression patterns" value="baseline and differential"/>
</dbReference>
<dbReference type="GO" id="GO:0043565">
    <property type="term" value="F:sequence-specific DNA binding"/>
    <property type="evidence" value="ECO:0007669"/>
    <property type="project" value="InterPro"/>
</dbReference>
<dbReference type="GO" id="GO:0008270">
    <property type="term" value="F:zinc ion binding"/>
    <property type="evidence" value="ECO:0007669"/>
    <property type="project" value="UniProtKB-KW"/>
</dbReference>
<dbReference type="Gene3D" id="6.20.210.20">
    <property type="entry name" value="THAP domain"/>
    <property type="match status" value="1"/>
</dbReference>
<dbReference type="InterPro" id="IPR026516">
    <property type="entry name" value="THAP1/10"/>
</dbReference>
<dbReference type="InterPro" id="IPR006612">
    <property type="entry name" value="THAP_Znf"/>
</dbReference>
<dbReference type="InterPro" id="IPR038441">
    <property type="entry name" value="THAP_Znf_sf"/>
</dbReference>
<dbReference type="PANTHER" id="PTHR46600">
    <property type="entry name" value="THAP DOMAIN-CONTAINING"/>
    <property type="match status" value="1"/>
</dbReference>
<dbReference type="PANTHER" id="PTHR46600:SF11">
    <property type="entry name" value="THAP DOMAIN-CONTAINING PROTEIN 10"/>
    <property type="match status" value="1"/>
</dbReference>
<dbReference type="Pfam" id="PF05485">
    <property type="entry name" value="THAP"/>
    <property type="match status" value="1"/>
</dbReference>
<dbReference type="SMART" id="SM00692">
    <property type="entry name" value="DM3"/>
    <property type="match status" value="1"/>
</dbReference>
<dbReference type="SMART" id="SM00980">
    <property type="entry name" value="THAP"/>
    <property type="match status" value="1"/>
</dbReference>
<dbReference type="SUPFAM" id="SSF57716">
    <property type="entry name" value="Glucocorticoid receptor-like (DNA-binding domain)"/>
    <property type="match status" value="1"/>
</dbReference>
<dbReference type="PROSITE" id="PS50950">
    <property type="entry name" value="ZF_THAP"/>
    <property type="match status" value="1"/>
</dbReference>
<protein>
    <recommendedName>
        <fullName>THAP domain-containing protein 10</fullName>
    </recommendedName>
</protein>
<organism>
    <name type="scientific">Homo sapiens</name>
    <name type="common">Human</name>
    <dbReference type="NCBI Taxonomy" id="9606"/>
    <lineage>
        <taxon>Eukaryota</taxon>
        <taxon>Metazoa</taxon>
        <taxon>Chordata</taxon>
        <taxon>Craniata</taxon>
        <taxon>Vertebrata</taxon>
        <taxon>Euteleostomi</taxon>
        <taxon>Mammalia</taxon>
        <taxon>Eutheria</taxon>
        <taxon>Euarchontoglires</taxon>
        <taxon>Primates</taxon>
        <taxon>Haplorrhini</taxon>
        <taxon>Catarrhini</taxon>
        <taxon>Hominidae</taxon>
        <taxon>Homo</taxon>
    </lineage>
</organism>
<gene>
    <name type="primary">THAP10</name>
</gene>